<organismHost>
    <name type="scientific">Acanthamoeba polyphaga</name>
    <name type="common">Amoeba</name>
    <dbReference type="NCBI Taxonomy" id="5757"/>
</organismHost>
<gene>
    <name type="ordered locus">MIMI_R626</name>
</gene>
<keyword id="KW-1185">Reference proteome</keyword>
<accession>Q5UR70</accession>
<protein>
    <recommendedName>
        <fullName>Uncharacterized protein R626</fullName>
    </recommendedName>
</protein>
<dbReference type="EMBL" id="AY653733">
    <property type="protein sequence ID" value="AAV50887.1"/>
    <property type="molecule type" value="Genomic_DNA"/>
</dbReference>
<dbReference type="KEGG" id="vg:9925268"/>
<dbReference type="OrthoDB" id="30875at10239"/>
<dbReference type="Proteomes" id="UP000001134">
    <property type="component" value="Genome"/>
</dbReference>
<feature type="chain" id="PRO_0000247404" description="Uncharacterized protein R626">
    <location>
        <begin position="1"/>
        <end position="599"/>
    </location>
</feature>
<organism>
    <name type="scientific">Acanthamoeba polyphaga mimivirus</name>
    <name type="common">APMV</name>
    <dbReference type="NCBI Taxonomy" id="212035"/>
    <lineage>
        <taxon>Viruses</taxon>
        <taxon>Varidnaviria</taxon>
        <taxon>Bamfordvirae</taxon>
        <taxon>Nucleocytoviricota</taxon>
        <taxon>Megaviricetes</taxon>
        <taxon>Imitervirales</taxon>
        <taxon>Mimiviridae</taxon>
        <taxon>Megamimivirinae</taxon>
        <taxon>Mimivirus</taxon>
        <taxon>Mimivirus bradfordmassiliense</taxon>
    </lineage>
</organism>
<reference key="1">
    <citation type="journal article" date="2004" name="Science">
        <title>The 1.2-megabase genome sequence of Mimivirus.</title>
        <authorList>
            <person name="Raoult D."/>
            <person name="Audic S."/>
            <person name="Robert C."/>
            <person name="Abergel C."/>
            <person name="Renesto P."/>
            <person name="Ogata H."/>
            <person name="La Scola B."/>
            <person name="Susan M."/>
            <person name="Claverie J.-M."/>
        </authorList>
    </citation>
    <scope>NUCLEOTIDE SEQUENCE [LARGE SCALE GENOMIC DNA]</scope>
    <source>
        <strain>Rowbotham-Bradford</strain>
    </source>
</reference>
<proteinExistence type="predicted"/>
<name>YR626_MIMIV</name>
<sequence length="599" mass="69418">METENKYDNAVVKVDCDKKFSLNKLRICFCIDTSNSTKSLFVQTKEWGMTYLDVEKLFVMKMAEKLSYPESVTYIGWNKEACQVDCIKNLVQQRGTNPSCLFENDTSYHIVSNSDIVFLITDGIISNEDVNMFHQHMKSRGIQLKAIIGVIVGRRTNTNETYFQIKPADINVSVIAPATIANSCILFYNMKTVYVVWASGDFENILQPNSITKETLWSDVTTTSFKDLSEISLTFPNDKIHNSLIKNEYIHLGKGNYFNPVKLLVSKPTFHELIEYPFSQICQYFKITQSYDKLYLWFKNLCKEKLEILCQQSLCSIKNMIVKSSDNTFQFCNPYYKPLFIIERNKLFVYKYILNNAINFNLKSLLFNSEERSIMEFIRGIYGTMQEDMISSNVDSDYLAMNISRDRYKSFTKKTSTEYDYFKNNKSISKNEILFDNNNFKDVILWINLFNNNLHESVKPNENCSLCGDQGIGCVVIKKFLNLSNDEIIDNPVDHIYPKILCEKCAVCFCNYQIDTAKYYAAIPIVKPREEINHLIMNMIMCLMNGFFIKYFASMNDKVLSLFSTIIESLVGRNISTFDMINDTNCDDVNDHDGIHMQE</sequence>